<evidence type="ECO:0000255" key="1">
    <source>
        <dbReference type="HAMAP-Rule" id="MF_04016"/>
    </source>
</evidence>
<proteinExistence type="inferred from homology"/>
<name>MCP_VZVD</name>
<accession>P09245</accession>
<reference key="1">
    <citation type="journal article" date="1986" name="J. Gen. Virol.">
        <title>The complete DNA sequence of varicella-zoster virus.</title>
        <authorList>
            <person name="Davison A.J."/>
            <person name="Scott J.E."/>
        </authorList>
    </citation>
    <scope>NUCLEOTIDE SEQUENCE [LARGE SCALE GENOMIC DNA]</scope>
</reference>
<sequence length="1396" mass="154980">MTTVSCPANVITTTESDRIAGLFNIPAGIIPTGNVLSTIEVCAHRCIFDFFKQIRSDDNSLYSAQFDILLGTYCNTLNFVRFLELGLSVACICTKFPELAYVRDGVIQFEVQQPMIARDGPHPVDQPVHNYMVKRIHKRSLSAAFAIASEALSLLSNTYVDGTEIDSSLRIRAIQQMARNLRTVLDSFERGTADQLLGVLLEKAPPLSLLSPINKFQPEGHLNRVARAALLSDLKRRVCADMFFMTRHAREPRLISAYLSDMVSCTQPSVMVSRITHTNTRGRQVDGVLVTTATLKRQLLQGILQIDDTAADVPVTYGEMVLQGTNLVTALVMGKAVRGMDDVARHLLDITDPNTLNIPSIPPQSNSDSTTAGLPVNARVPADLVIVGDKLVFLEALERRVYQATRVAYPLIGNIDITFIMPMGVFQANSMDRYTRHAGDFSTVSEQDPRQFPPQGIFFYNKDGILTQLTLRDAMGTICHSSLLDVEATLVALRQQHLDRQCYFGVYVAEGTEDTLDVQMGRFMETWADMMPHHPHWVNEHLTILQFIAPSNPRLRFELNPAFDFFVAPGDVDLPGPQRPPEAMPTVNATLRIINGNIPVPLCPISFRDCRGTQLGLGRHTMTPATIKAVKDTFEDRAYPTIFYMLEAVIHGNERNFCALLRLLTQCIRGYWEQSHRVAFVNNFHMLMYITTYLGNGELPEVCINIYRDLLQHVRALRQTITDFTIQGEGHNGETSEALNNILTDDTFIAPILWDCDALIYRDEAARDRLPAIRVSGRNGYQALHFVDMAGHNFQRRDNVLIHGRPVRGDTGQGIPITPHHDREWGILSKIYYYIVIPAFSRGSCCTMGVRYDRLYPALQAVIVPEIPADEEAPTTPEDPRHPLHAHQLVPNSLNVYFHNAHLTVDGDALLTLQELMGDMAERTTAILVSSAPDAGAATATTRNMRIYDGALYHGLIMMAYQAYDETIATGTFFYPVPVNPLFACPEHLASLRGMTNARRVLAKMVPPIPPFLGANHHATIRQPVAYHVTHSKSDFNTLTYSLLGGYFKFTPISLTHQLRTGFHPGIAFTVVRQDRFATEQLLYAERASESYFVGQIQVHHHDAIGGVNFTLTQPRAHVDLGVGYTAVCATAALRCPLTDMGNTAQNLFFSRGGVPMLHDNVTESLRRITASGGRLNPTEPLPIFGGLRPATSAGIARGQASVCEFVAMPVSTDLQYFRTACNPRGRASGMLYMGDRDADIEAIMFDHTQSDVAYTDRATLNPWASQKHSYGDRLYNGTYNLTGASPIYSPCFKFFTPAEVNTNCNTLDRLLMEAKAVASQSSTDTEYQFKRPPGSTEMTQDPCGLFQEAYPPLCSSDAAMLRTAHAGETGADEVHLAQYLIRDASPLRGCLPLPR</sequence>
<feature type="chain" id="PRO_0000115707" description="Major capsid protein">
    <location>
        <begin position="1"/>
        <end position="1396"/>
    </location>
</feature>
<keyword id="KW-0167">Capsid protein</keyword>
<keyword id="KW-1048">Host nucleus</keyword>
<keyword id="KW-1185">Reference proteome</keyword>
<keyword id="KW-1147">T=16 icosahedral capsid protein</keyword>
<keyword id="KW-0946">Virion</keyword>
<gene>
    <name evidence="1" type="primary">MCP</name>
    <name type="synonym">40</name>
</gene>
<comment type="function">
    <text evidence="1">Self-assembles to form an icosahedral capsid with a T=16 symmetry, about 200 nm in diameter, and consisting of 150 hexons and 12 pentons (total of 162 capsomers). Hexons form the edges and faces of the capsid and are each composed of six MCP molecules. In contrast, one penton is found at each of the 12 vertices. Eleven of the pentons are MCP pentamers, while the last vertex is occupied by the portal complex. The capsid is surrounded by a layer of proteinaceous material designated the tegument which, in turn, is enclosed in an envelope of host cell-derived lipids containing virus-encoded glycoproteins.</text>
</comment>
<comment type="subunit">
    <text evidence="1">Homomultimer. Makes the hexons and eleven out of twelve pentons. Interacts with triplex proteins 1/TRX1 and 2/TRX2; adjacent capsomers are linked together in groups of three by triplexes, heterotrimeric complexes composed of one molecule of TRX1 and two molecules of TRX2. Interacts with scaffold protein; this interaction allows efficient MCP transport to the host nucleus. Interacts with capsid vertex component 2/CVC2. Interacts with the small capsomere-interacting protein/SCP.</text>
</comment>
<comment type="subcellular location">
    <subcellularLocation>
        <location evidence="1">Virion</location>
    </subcellularLocation>
    <subcellularLocation>
        <location evidence="1">Host nucleus</location>
    </subcellularLocation>
</comment>
<comment type="similarity">
    <text evidence="1">Belongs to the herpesviridae major capsid protein family.</text>
</comment>
<dbReference type="EMBL" id="X04370">
    <property type="protein sequence ID" value="CAA27923.1"/>
    <property type="molecule type" value="Genomic_DNA"/>
</dbReference>
<dbReference type="PIR" id="E27341">
    <property type="entry name" value="VCBE40"/>
</dbReference>
<dbReference type="SMR" id="P09245"/>
<dbReference type="Proteomes" id="UP000002602">
    <property type="component" value="Genome"/>
</dbReference>
<dbReference type="GO" id="GO:0042025">
    <property type="term" value="C:host cell nucleus"/>
    <property type="evidence" value="ECO:0007669"/>
    <property type="project" value="UniProtKB-SubCell"/>
</dbReference>
<dbReference type="GO" id="GO:0039622">
    <property type="term" value="C:T=16 icosahedral viral capsid"/>
    <property type="evidence" value="ECO:0007669"/>
    <property type="project" value="UniProtKB-KW"/>
</dbReference>
<dbReference type="GO" id="GO:0005198">
    <property type="term" value="F:structural molecule activity"/>
    <property type="evidence" value="ECO:0007669"/>
    <property type="project" value="InterPro"/>
</dbReference>
<dbReference type="HAMAP" id="MF_04016">
    <property type="entry name" value="HSV_MCP"/>
    <property type="match status" value="1"/>
</dbReference>
<dbReference type="InterPro" id="IPR000912">
    <property type="entry name" value="Herpes_MCP"/>
</dbReference>
<dbReference type="InterPro" id="IPR023233">
    <property type="entry name" value="Herpes_MCP_upper_sf"/>
</dbReference>
<dbReference type="Pfam" id="PF03122">
    <property type="entry name" value="Herpes_MCP"/>
    <property type="match status" value="1"/>
</dbReference>
<dbReference type="PRINTS" id="PR00235">
    <property type="entry name" value="HSVCAPSIDMCP"/>
</dbReference>
<dbReference type="SUPFAM" id="SSF103417">
    <property type="entry name" value="Major capsid protein VP5"/>
    <property type="match status" value="1"/>
</dbReference>
<protein>
    <recommendedName>
        <fullName evidence="1">Major capsid protein</fullName>
        <shortName evidence="1">MCP</shortName>
    </recommendedName>
</protein>
<organism>
    <name type="scientific">Varicella-zoster virus (strain Dumas)</name>
    <name type="common">HHV-3</name>
    <name type="synonym">Human herpesvirus 3</name>
    <dbReference type="NCBI Taxonomy" id="10338"/>
    <lineage>
        <taxon>Viruses</taxon>
        <taxon>Duplodnaviria</taxon>
        <taxon>Heunggongvirae</taxon>
        <taxon>Peploviricota</taxon>
        <taxon>Herviviricetes</taxon>
        <taxon>Herpesvirales</taxon>
        <taxon>Orthoherpesviridae</taxon>
        <taxon>Alphaherpesvirinae</taxon>
        <taxon>Varicellovirus</taxon>
        <taxon>Varicellovirus humanalpha3</taxon>
        <taxon>Human herpesvirus 3</taxon>
    </lineage>
</organism>
<organismHost>
    <name type="scientific">Homo sapiens</name>
    <name type="common">Human</name>
    <dbReference type="NCBI Taxonomy" id="9606"/>
</organismHost>